<proteinExistence type="evidence at protein level"/>
<protein>
    <recommendedName>
        <fullName evidence="5">Dolichyl-phosphate beta-glucosyltransferase ALG5D</fullName>
        <shortName>DolP-glucosyltransferase</shortName>
        <ecNumber evidence="3">2.4.1.117</ecNumber>
    </recommendedName>
</protein>
<evidence type="ECO:0000250" key="1">
    <source>
        <dbReference type="UniProtKB" id="P40350"/>
    </source>
</evidence>
<evidence type="ECO:0000255" key="2"/>
<evidence type="ECO:0000269" key="3">
    <source>
    </source>
</evidence>
<evidence type="ECO:0000303" key="4">
    <source>
    </source>
</evidence>
<evidence type="ECO:0000303" key="5">
    <source>
    </source>
</evidence>
<evidence type="ECO:0000305" key="6"/>
<evidence type="ECO:0000305" key="7">
    <source>
    </source>
</evidence>
<comment type="function">
    <text evidence="3">Dolichyl-phosphate beta-glucosyltransferase involved in the glycosylation of glycoproteins through the synthesis of dolichyl beta-D-glucosyl phosphate which serves as a sugar donor for transfer of three glucose residues to the Man-9-GlcNAc-2-PP-dolichol precursor to N-glycans.</text>
</comment>
<comment type="catalytic activity">
    <reaction evidence="3">
        <text>a di-trans,poly-cis-dolichyl phosphate + UDP-alpha-D-glucose = a di-trans,poly-cis-dolichyl beta-D-glucosyl phosphate + UDP</text>
        <dbReference type="Rhea" id="RHEA:15401"/>
        <dbReference type="Rhea" id="RHEA-COMP:19498"/>
        <dbReference type="Rhea" id="RHEA-COMP:19502"/>
        <dbReference type="ChEBI" id="CHEBI:57525"/>
        <dbReference type="ChEBI" id="CHEBI:57683"/>
        <dbReference type="ChEBI" id="CHEBI:58223"/>
        <dbReference type="ChEBI" id="CHEBI:58885"/>
        <dbReference type="EC" id="2.4.1.117"/>
    </reaction>
    <physiologicalReaction direction="left-to-right" evidence="7">
        <dbReference type="Rhea" id="RHEA:15402"/>
    </physiologicalReaction>
</comment>
<comment type="pathway">
    <text evidence="3">Protein modification; protein glycosylation.</text>
</comment>
<comment type="subcellular location">
    <subcellularLocation>
        <location evidence="1">Endoplasmic reticulum membrane</location>
        <topology evidence="2">Single-pass membrane protein</topology>
    </subcellularLocation>
</comment>
<comment type="similarity">
    <text evidence="6">Belongs to the glycosyltransferase 2 family.</text>
</comment>
<reference key="1">
    <citation type="journal article" date="2007" name="Science">
        <title>Draft genome sequence of the sexually transmitted pathogen Trichomonas vaginalis.</title>
        <authorList>
            <person name="Carlton J.M."/>
            <person name="Hirt R.P."/>
            <person name="Silva J.C."/>
            <person name="Delcher A.L."/>
            <person name="Schatz M."/>
            <person name="Zhao Q."/>
            <person name="Wortman J.R."/>
            <person name="Bidwell S.L."/>
            <person name="Alsmark U.C.M."/>
            <person name="Besteiro S."/>
            <person name="Sicheritz-Ponten T."/>
            <person name="Noel C.J."/>
            <person name="Dacks J.B."/>
            <person name="Foster P.G."/>
            <person name="Simillion C."/>
            <person name="Van de Peer Y."/>
            <person name="Miranda-Saavedra D."/>
            <person name="Barton G.J."/>
            <person name="Westrop G.D."/>
            <person name="Mueller S."/>
            <person name="Dessi D."/>
            <person name="Fiori P.L."/>
            <person name="Ren Q."/>
            <person name="Paulsen I."/>
            <person name="Zhang H."/>
            <person name="Bastida-Corcuera F.D."/>
            <person name="Simoes-Barbosa A."/>
            <person name="Brown M.T."/>
            <person name="Hayes R.D."/>
            <person name="Mukherjee M."/>
            <person name="Okumura C.Y."/>
            <person name="Schneider R."/>
            <person name="Smith A.J."/>
            <person name="Vanacova S."/>
            <person name="Villalvazo M."/>
            <person name="Haas B.J."/>
            <person name="Pertea M."/>
            <person name="Feldblyum T.V."/>
            <person name="Utterback T.R."/>
            <person name="Shu C.L."/>
            <person name="Osoegawa K."/>
            <person name="de Jong P.J."/>
            <person name="Hrdy I."/>
            <person name="Horvathova L."/>
            <person name="Zubacova Z."/>
            <person name="Dolezal P."/>
            <person name="Malik S.B."/>
            <person name="Logsdon J.M. Jr."/>
            <person name="Henze K."/>
            <person name="Gupta A."/>
            <person name="Wang C.C."/>
            <person name="Dunne R.L."/>
            <person name="Upcroft J.A."/>
            <person name="Upcroft P."/>
            <person name="White O."/>
            <person name="Salzberg S.L."/>
            <person name="Tang P."/>
            <person name="Chiu C.-H."/>
            <person name="Lee Y.-S."/>
            <person name="Embley T.M."/>
            <person name="Coombs G.H."/>
            <person name="Mottram J.C."/>
            <person name="Tachezy J."/>
            <person name="Fraser-Liggett C.M."/>
            <person name="Johnson P.J."/>
        </authorList>
    </citation>
    <scope>NUCLEOTIDE SEQUENCE [LARGE SCALE GENOMIC DNA]</scope>
    <source>
        <strain>ATCC PRA-98 / G3</strain>
    </source>
</reference>
<reference key="2">
    <citation type="journal article" date="2008" name="Eukaryot. Cell">
        <title>Dolichyl-phosphate-glucose is used to make O-glycans on glycoproteins of Trichomonas vaginalis.</title>
        <authorList>
            <person name="Grabinska K.A."/>
            <person name="Ghosh S.K."/>
            <person name="Guan Z."/>
            <person name="Cui J."/>
            <person name="Raetz C.R."/>
            <person name="Robbins P.W."/>
            <person name="Samuelson J."/>
        </authorList>
    </citation>
    <scope>FUNCTION</scope>
    <scope>CATALYTIC ACTIVITY</scope>
</reference>
<dbReference type="EC" id="2.4.1.117" evidence="3"/>
<dbReference type="EMBL" id="DS113295">
    <property type="protein sequence ID" value="EAY12817.1"/>
    <property type="molecule type" value="Genomic_DNA"/>
</dbReference>
<dbReference type="RefSeq" id="XP_001325040.1">
    <property type="nucleotide sequence ID" value="XM_001325005.1"/>
</dbReference>
<dbReference type="SMR" id="A2E3C6"/>
<dbReference type="FunCoup" id="A2E3C6">
    <property type="interactions" value="465"/>
</dbReference>
<dbReference type="STRING" id="5722.A2E3C6"/>
<dbReference type="GlyCosmos" id="A2E3C6">
    <property type="glycosylation" value="1 site, No reported glycans"/>
</dbReference>
<dbReference type="KEGG" id="tva:TVAG_2v0969950"/>
<dbReference type="VEuPathDB" id="TrichDB:TVAG_221700"/>
<dbReference type="VEuPathDB" id="TrichDB:TVAGG3_0969950"/>
<dbReference type="eggNOG" id="KOG2977">
    <property type="taxonomic scope" value="Eukaryota"/>
</dbReference>
<dbReference type="InParanoid" id="A2E3C6"/>
<dbReference type="OrthoDB" id="3784at2759"/>
<dbReference type="UniPathway" id="UPA00378"/>
<dbReference type="Proteomes" id="UP000001542">
    <property type="component" value="Unassembled WGS sequence"/>
</dbReference>
<dbReference type="GO" id="GO:0005789">
    <property type="term" value="C:endoplasmic reticulum membrane"/>
    <property type="evidence" value="ECO:0000318"/>
    <property type="project" value="GO_Central"/>
</dbReference>
<dbReference type="GO" id="GO:0004581">
    <property type="term" value="F:dolichyl-phosphate beta-glucosyltransferase activity"/>
    <property type="evidence" value="ECO:0007669"/>
    <property type="project" value="UniProtKB-EC"/>
</dbReference>
<dbReference type="GO" id="GO:0006487">
    <property type="term" value="P:protein N-linked glycosylation"/>
    <property type="evidence" value="ECO:0000318"/>
    <property type="project" value="GO_Central"/>
</dbReference>
<dbReference type="CDD" id="cd04188">
    <property type="entry name" value="DPG_synthase"/>
    <property type="match status" value="1"/>
</dbReference>
<dbReference type="FunFam" id="3.90.550.10:FF:000303">
    <property type="entry name" value="Dolichyl-phosphate beta-glucosyltransferase ALG5D"/>
    <property type="match status" value="1"/>
</dbReference>
<dbReference type="Gene3D" id="3.90.550.10">
    <property type="entry name" value="Spore Coat Polysaccharide Biosynthesis Protein SpsA, Chain A"/>
    <property type="match status" value="1"/>
</dbReference>
<dbReference type="InterPro" id="IPR035518">
    <property type="entry name" value="DPG_synthase"/>
</dbReference>
<dbReference type="InterPro" id="IPR001173">
    <property type="entry name" value="Glyco_trans_2-like"/>
</dbReference>
<dbReference type="InterPro" id="IPR029044">
    <property type="entry name" value="Nucleotide-diphossugar_trans"/>
</dbReference>
<dbReference type="PANTHER" id="PTHR10859:SF91">
    <property type="entry name" value="DOLICHYL-PHOSPHATE BETA-GLUCOSYLTRANSFERASE"/>
    <property type="match status" value="1"/>
</dbReference>
<dbReference type="PANTHER" id="PTHR10859">
    <property type="entry name" value="GLYCOSYL TRANSFERASE"/>
    <property type="match status" value="1"/>
</dbReference>
<dbReference type="Pfam" id="PF00535">
    <property type="entry name" value="Glycos_transf_2"/>
    <property type="match status" value="1"/>
</dbReference>
<dbReference type="SUPFAM" id="SSF53448">
    <property type="entry name" value="Nucleotide-diphospho-sugar transferases"/>
    <property type="match status" value="1"/>
</dbReference>
<organism>
    <name type="scientific">Trichomonas vaginalis (strain ATCC PRA-98 / G3)</name>
    <dbReference type="NCBI Taxonomy" id="412133"/>
    <lineage>
        <taxon>Eukaryota</taxon>
        <taxon>Metamonada</taxon>
        <taxon>Parabasalia</taxon>
        <taxon>Trichomonadida</taxon>
        <taxon>Trichomonadidae</taxon>
        <taxon>Trichomonas</taxon>
    </lineage>
</organism>
<feature type="chain" id="PRO_0000431408" description="Dolichyl-phosphate beta-glucosyltransferase ALG5D">
    <location>
        <begin position="1"/>
        <end position="327"/>
    </location>
</feature>
<feature type="topological domain" description="Lumenal" evidence="6">
    <location>
        <begin position="1"/>
        <end position="6"/>
    </location>
</feature>
<feature type="transmembrane region" description="Helical" evidence="2">
    <location>
        <begin position="7"/>
        <end position="27"/>
    </location>
</feature>
<feature type="topological domain" description="Cytoplasmic" evidence="6">
    <location>
        <begin position="28"/>
        <end position="327"/>
    </location>
</feature>
<gene>
    <name evidence="5" type="primary">ALG5D</name>
    <name evidence="4" type="ORF">TVAG_221700</name>
</gene>
<sequence length="327" mass="37953">MEKQLAELSVYILIIFLILGFIMAILMRFGDDTTLFDLTQLPKNNPKKLNYYVQPAKNPNENVPFKTIFDKPQVYVSFIVPAYNEEKRLPKMLEETIEYLEQRRYKDNNFTWEIVVVNDGSKDRTAHVVLEYAERYSNIFLLNQPHNMGKGAAIQAGCLHARGQLVLMVDADGATKISDFGLLENEIKKLMKNNKEAIVVGSRTLNEDKSKVHRTFIRKILGLGMHILIVISGVHGIKDTQCGFKLFTRDACKMLFMNQHVQRWCFDPELLVIARRRKMKVSEISVEWNEIEGSKMKISGMIKMAIDLLRIAVFYRLNIWTIRDRKF</sequence>
<name>ALG5D_TRIV3</name>
<keyword id="KW-0256">Endoplasmic reticulum</keyword>
<keyword id="KW-0328">Glycosyltransferase</keyword>
<keyword id="KW-0472">Membrane</keyword>
<keyword id="KW-1185">Reference proteome</keyword>
<keyword id="KW-0735">Signal-anchor</keyword>
<keyword id="KW-0808">Transferase</keyword>
<keyword id="KW-0812">Transmembrane</keyword>
<keyword id="KW-1133">Transmembrane helix</keyword>
<accession>A2E3C6</accession>